<evidence type="ECO:0000250" key="1"/>
<evidence type="ECO:0000250" key="2">
    <source>
        <dbReference type="UniProtKB" id="O81149"/>
    </source>
</evidence>
<evidence type="ECO:0000255" key="3">
    <source>
        <dbReference type="PROSITE-ProRule" id="PRU00808"/>
    </source>
</evidence>
<evidence type="ECO:0000269" key="4">
    <source>
    </source>
</evidence>
<evidence type="ECO:0000269" key="5">
    <source>
    </source>
</evidence>
<evidence type="ECO:0000269" key="6">
    <source>
    </source>
</evidence>
<organism>
    <name type="scientific">Arabidopsis thaliana</name>
    <name type="common">Mouse-ear cress</name>
    <dbReference type="NCBI Taxonomy" id="3702"/>
    <lineage>
        <taxon>Eukaryota</taxon>
        <taxon>Viridiplantae</taxon>
        <taxon>Streptophyta</taxon>
        <taxon>Embryophyta</taxon>
        <taxon>Tracheophyta</taxon>
        <taxon>Spermatophyta</taxon>
        <taxon>Magnoliopsida</taxon>
        <taxon>eudicotyledons</taxon>
        <taxon>Gunneridae</taxon>
        <taxon>Pentapetalae</taxon>
        <taxon>rosids</taxon>
        <taxon>malvids</taxon>
        <taxon>Brassicales</taxon>
        <taxon>Brassicaceae</taxon>
        <taxon>Camelineae</taxon>
        <taxon>Arabidopsis</taxon>
    </lineage>
</organism>
<dbReference type="EMBL" id="AF043523">
    <property type="protein sequence ID" value="AAC32059.1"/>
    <property type="molecule type" value="mRNA"/>
</dbReference>
<dbReference type="EMBL" id="AB011474">
    <property type="protein sequence ID" value="BAB10419.1"/>
    <property type="molecule type" value="Genomic_DNA"/>
</dbReference>
<dbReference type="EMBL" id="CP002688">
    <property type="protein sequence ID" value="AED98164.1"/>
    <property type="molecule type" value="Genomic_DNA"/>
</dbReference>
<dbReference type="EMBL" id="Y13179">
    <property type="protein sequence ID" value="CAA73622.1"/>
    <property type="molecule type" value="mRNA"/>
</dbReference>
<dbReference type="EMBL" id="Y13180">
    <property type="protein sequence ID" value="CAA73623.1"/>
    <property type="molecule type" value="mRNA"/>
</dbReference>
<dbReference type="EMBL" id="AK227551">
    <property type="protein sequence ID" value="BAE99547.1"/>
    <property type="molecule type" value="mRNA"/>
</dbReference>
<dbReference type="EMBL" id="BT004572">
    <property type="protein sequence ID" value="AAO42818.1"/>
    <property type="molecule type" value="mRNA"/>
</dbReference>
<dbReference type="PIR" id="T51971">
    <property type="entry name" value="T51971"/>
</dbReference>
<dbReference type="RefSeq" id="NP_201415.1">
    <property type="nucleotide sequence ID" value="NM_126012.4"/>
</dbReference>
<dbReference type="SMR" id="O24616"/>
<dbReference type="BioGRID" id="21988">
    <property type="interactions" value="80"/>
</dbReference>
<dbReference type="FunCoup" id="O24616">
    <property type="interactions" value="3023"/>
</dbReference>
<dbReference type="STRING" id="3702.O24616"/>
<dbReference type="PaxDb" id="3702-AT5G66140.1"/>
<dbReference type="ProteomicsDB" id="226388"/>
<dbReference type="EnsemblPlants" id="AT5G66140.1">
    <property type="protein sequence ID" value="AT5G66140.1"/>
    <property type="gene ID" value="AT5G66140"/>
</dbReference>
<dbReference type="GeneID" id="836746"/>
<dbReference type="Gramene" id="AT5G66140.1">
    <property type="protein sequence ID" value="AT5G66140.1"/>
    <property type="gene ID" value="AT5G66140"/>
</dbReference>
<dbReference type="KEGG" id="ath:AT5G66140"/>
<dbReference type="Araport" id="AT5G66140"/>
<dbReference type="TAIR" id="AT5G66140">
    <property type="gene designation" value="PAD2"/>
</dbReference>
<dbReference type="eggNOG" id="KOG0183">
    <property type="taxonomic scope" value="Eukaryota"/>
</dbReference>
<dbReference type="HOGENOM" id="CLU_035750_4_0_1"/>
<dbReference type="InParanoid" id="O24616"/>
<dbReference type="OMA" id="ICMLDHH"/>
<dbReference type="PhylomeDB" id="O24616"/>
<dbReference type="CD-CODE" id="4299E36E">
    <property type="entry name" value="Nucleolus"/>
</dbReference>
<dbReference type="PRO" id="PR:O24616"/>
<dbReference type="Proteomes" id="UP000006548">
    <property type="component" value="Chromosome 5"/>
</dbReference>
<dbReference type="ExpressionAtlas" id="O24616">
    <property type="expression patterns" value="baseline and differential"/>
</dbReference>
<dbReference type="GO" id="GO:0005634">
    <property type="term" value="C:nucleus"/>
    <property type="evidence" value="ECO:0007669"/>
    <property type="project" value="UniProtKB-SubCell"/>
</dbReference>
<dbReference type="GO" id="GO:0009536">
    <property type="term" value="C:plastid"/>
    <property type="evidence" value="ECO:0007005"/>
    <property type="project" value="TAIR"/>
</dbReference>
<dbReference type="GO" id="GO:0000502">
    <property type="term" value="C:proteasome complex"/>
    <property type="evidence" value="ECO:0000314"/>
    <property type="project" value="TAIR"/>
</dbReference>
<dbReference type="GO" id="GO:0019773">
    <property type="term" value="C:proteasome core complex, alpha-subunit complex"/>
    <property type="evidence" value="ECO:0000250"/>
    <property type="project" value="UniProtKB"/>
</dbReference>
<dbReference type="GO" id="GO:0005773">
    <property type="term" value="C:vacuole"/>
    <property type="evidence" value="ECO:0007005"/>
    <property type="project" value="TAIR"/>
</dbReference>
<dbReference type="GO" id="GO:0006511">
    <property type="term" value="P:ubiquitin-dependent protein catabolic process"/>
    <property type="evidence" value="ECO:0000304"/>
    <property type="project" value="TAIR"/>
</dbReference>
<dbReference type="CDD" id="cd03755">
    <property type="entry name" value="proteasome_alpha_type_7"/>
    <property type="match status" value="1"/>
</dbReference>
<dbReference type="FunFam" id="3.60.20.10:FF:000004">
    <property type="entry name" value="Proteasome subunit alpha type-4"/>
    <property type="match status" value="1"/>
</dbReference>
<dbReference type="Gene3D" id="3.60.20.10">
    <property type="entry name" value="Glutamine Phosphoribosylpyrophosphate, subunit 1, domain 1"/>
    <property type="match status" value="1"/>
</dbReference>
<dbReference type="InterPro" id="IPR029055">
    <property type="entry name" value="Ntn_hydrolases_N"/>
</dbReference>
<dbReference type="InterPro" id="IPR050115">
    <property type="entry name" value="Proteasome_alpha"/>
</dbReference>
<dbReference type="InterPro" id="IPR023332">
    <property type="entry name" value="Proteasome_alpha-type"/>
</dbReference>
<dbReference type="InterPro" id="IPR000426">
    <property type="entry name" value="Proteasome_asu_N"/>
</dbReference>
<dbReference type="InterPro" id="IPR001353">
    <property type="entry name" value="Proteasome_sua/b"/>
</dbReference>
<dbReference type="NCBIfam" id="NF003075">
    <property type="entry name" value="PRK03996.1"/>
    <property type="match status" value="1"/>
</dbReference>
<dbReference type="PANTHER" id="PTHR11599">
    <property type="entry name" value="PROTEASOME SUBUNIT ALPHA/BETA"/>
    <property type="match status" value="1"/>
</dbReference>
<dbReference type="Pfam" id="PF00227">
    <property type="entry name" value="Proteasome"/>
    <property type="match status" value="1"/>
</dbReference>
<dbReference type="Pfam" id="PF10584">
    <property type="entry name" value="Proteasome_A_N"/>
    <property type="match status" value="1"/>
</dbReference>
<dbReference type="SMART" id="SM00948">
    <property type="entry name" value="Proteasome_A_N"/>
    <property type="match status" value="1"/>
</dbReference>
<dbReference type="SUPFAM" id="SSF56235">
    <property type="entry name" value="N-terminal nucleophile aminohydrolases (Ntn hydrolases)"/>
    <property type="match status" value="1"/>
</dbReference>
<dbReference type="PROSITE" id="PS00388">
    <property type="entry name" value="PROTEASOME_ALPHA_1"/>
    <property type="match status" value="1"/>
</dbReference>
<dbReference type="PROSITE" id="PS51475">
    <property type="entry name" value="PROTEASOME_ALPHA_2"/>
    <property type="match status" value="1"/>
</dbReference>
<sequence>MARYDRAITVFSPDGHLFQVEYALEAVRKGNAAVGVRGTDTVVLAVEKKSTPKLQDSRSARKIVSLDNHIALACAGLKADARVLINKARIECQSHRLTLEDPVTVEYITRYIAGLQQKYTQSGGVRPFGLSTLIVGFDPYSRLPSLYQTDPSGTFSAWKANATGRNSNSIREFLEKNYKESSGQETIKLAIRALLEVVESGGKNIEVAVMTREETGLRQLEEAEIDAIVAKIEAEKAAAEAAKKGPPKET</sequence>
<gene>
    <name type="primary">PAD2</name>
    <name type="synonym">PRC6B</name>
    <name type="synonym">PRC6C</name>
    <name type="synonym">PRS1</name>
    <name type="ordered locus">At5g66140</name>
    <name type="ORF">K2A18.22</name>
</gene>
<proteinExistence type="evidence at protein level"/>
<accession>O24616</accession>
<accession>Q0WTK1</accession>
<accession>Q84W05</accession>
<keyword id="KW-0963">Cytoplasm</keyword>
<keyword id="KW-1017">Isopeptide bond</keyword>
<keyword id="KW-0539">Nucleus</keyword>
<keyword id="KW-0647">Proteasome</keyword>
<keyword id="KW-1185">Reference proteome</keyword>
<keyword id="KW-0832">Ubl conjugation</keyword>
<comment type="function">
    <text>The proteasome is a multicatalytic proteinase complex which is characterized by its ability to cleave peptides with Arg, Phe, Tyr, Leu, and Glu adjacent to the leaving group at neutral or slightly basic pH. The proteasome has an ATP-dependent proteolytic activity.</text>
</comment>
<comment type="subunit">
    <text evidence="4 5 6">Component of the 20S core complex of the 26S proteasome. The 26S proteasome is composed of a core protease (CP), known as the 20S proteasome, capped at one or both ends by the 19S regulatory particle (RP/PA700). The 20S proteasome core is composed of 28 subunits that are arranged in four stacked rings, resulting in a barrel-shaped structure. The two end rings are each formed by seven alpha subunits, and the two central rings are each formed by seven beta subunits. The catalytic chamber with the active sites is on the inside of the barrel.</text>
</comment>
<comment type="subcellular location">
    <subcellularLocation>
        <location evidence="1">Cytoplasm</location>
    </subcellularLocation>
    <subcellularLocation>
        <location evidence="1">Nucleus</location>
    </subcellularLocation>
</comment>
<comment type="similarity">
    <text evidence="3">Belongs to the peptidase T1A family.</text>
</comment>
<name>PSA7B_ARATH</name>
<reference key="1">
    <citation type="journal article" date="1998" name="Genetics">
        <title>Molecular organization of the 20S proteasome gene family from Arabidopsis thaliana.</title>
        <authorList>
            <person name="Fu H."/>
            <person name="Doelling J.H."/>
            <person name="Arendt C.S."/>
            <person name="Hochstrasser M."/>
            <person name="Vierstra R.D."/>
        </authorList>
    </citation>
    <scope>NUCLEOTIDE SEQUENCE [MRNA]</scope>
    <scope>GENE FAMILY</scope>
    <scope>NOMENCLATURE</scope>
    <source>
        <strain>cv. Columbia</strain>
    </source>
</reference>
<reference key="2">
    <citation type="journal article" date="1998" name="DNA Res.">
        <title>Structural analysis of Arabidopsis thaliana chromosome 5. V. Sequence features of the regions of 1,381,565 bp covered by twenty one physically assigned P1 and TAC clones.</title>
        <authorList>
            <person name="Kaneko T."/>
            <person name="Kotani H."/>
            <person name="Nakamura Y."/>
            <person name="Sato S."/>
            <person name="Asamizu E."/>
            <person name="Miyajima N."/>
            <person name="Tabata S."/>
        </authorList>
    </citation>
    <scope>NUCLEOTIDE SEQUENCE [LARGE SCALE GENOMIC DNA]</scope>
    <source>
        <strain>cv. Columbia</strain>
    </source>
</reference>
<reference key="3">
    <citation type="journal article" date="2017" name="Plant J.">
        <title>Araport11: a complete reannotation of the Arabidopsis thaliana reference genome.</title>
        <authorList>
            <person name="Cheng C.Y."/>
            <person name="Krishnakumar V."/>
            <person name="Chan A.P."/>
            <person name="Thibaud-Nissen F."/>
            <person name="Schobel S."/>
            <person name="Town C.D."/>
        </authorList>
    </citation>
    <scope>GENOME REANNOTATION</scope>
    <source>
        <strain>cv. Columbia</strain>
    </source>
</reference>
<reference key="4">
    <citation type="journal article" date="1997" name="FEBS Lett.">
        <title>The 20S proteasome gene family in Arabidopsis thaliana.</title>
        <authorList>
            <person name="Parmentier Y."/>
            <person name="Bouchez D."/>
            <person name="Fleck J."/>
            <person name="Genschik P."/>
        </authorList>
    </citation>
    <scope>NUCLEOTIDE SEQUENCE [MRNA] OF 1-235</scope>
    <source>
        <strain>cv. Columbia</strain>
    </source>
</reference>
<reference key="5">
    <citation type="submission" date="2006-07" db="EMBL/GenBank/DDBJ databases">
        <title>Large-scale analysis of RIKEN Arabidopsis full-length (RAFL) cDNAs.</title>
        <authorList>
            <person name="Totoki Y."/>
            <person name="Seki M."/>
            <person name="Ishida J."/>
            <person name="Nakajima M."/>
            <person name="Enju A."/>
            <person name="Kamiya A."/>
            <person name="Narusaka M."/>
            <person name="Shin-i T."/>
            <person name="Nakagawa M."/>
            <person name="Sakamoto N."/>
            <person name="Oishi K."/>
            <person name="Kohara Y."/>
            <person name="Kobayashi M."/>
            <person name="Toyoda A."/>
            <person name="Sakaki Y."/>
            <person name="Sakurai T."/>
            <person name="Iida K."/>
            <person name="Akiyama K."/>
            <person name="Satou M."/>
            <person name="Toyoda T."/>
            <person name="Konagaya A."/>
            <person name="Carninci P."/>
            <person name="Kawai J."/>
            <person name="Hayashizaki Y."/>
            <person name="Shinozaki K."/>
        </authorList>
    </citation>
    <scope>NUCLEOTIDE SEQUENCE [LARGE SCALE MRNA] OF 177-250</scope>
    <source>
        <strain>cv. Columbia</strain>
    </source>
</reference>
<reference key="6">
    <citation type="journal article" date="2003" name="Science">
        <title>Empirical analysis of transcriptional activity in the Arabidopsis genome.</title>
        <authorList>
            <person name="Yamada K."/>
            <person name="Lim J."/>
            <person name="Dale J.M."/>
            <person name="Chen H."/>
            <person name="Shinn P."/>
            <person name="Palm C.J."/>
            <person name="Southwick A.M."/>
            <person name="Wu H.C."/>
            <person name="Kim C.J."/>
            <person name="Nguyen M."/>
            <person name="Pham P.K."/>
            <person name="Cheuk R.F."/>
            <person name="Karlin-Newmann G."/>
            <person name="Liu S.X."/>
            <person name="Lam B."/>
            <person name="Sakano H."/>
            <person name="Wu T."/>
            <person name="Yu G."/>
            <person name="Miranda M."/>
            <person name="Quach H.L."/>
            <person name="Tripp M."/>
            <person name="Chang C.H."/>
            <person name="Lee J.M."/>
            <person name="Toriumi M.J."/>
            <person name="Chan M.M."/>
            <person name="Tang C.C."/>
            <person name="Onodera C.S."/>
            <person name="Deng J.M."/>
            <person name="Akiyama K."/>
            <person name="Ansari Y."/>
            <person name="Arakawa T."/>
            <person name="Banh J."/>
            <person name="Banno F."/>
            <person name="Bowser L."/>
            <person name="Brooks S.Y."/>
            <person name="Carninci P."/>
            <person name="Chao Q."/>
            <person name="Choy N."/>
            <person name="Enju A."/>
            <person name="Goldsmith A.D."/>
            <person name="Gurjal M."/>
            <person name="Hansen N.F."/>
            <person name="Hayashizaki Y."/>
            <person name="Johnson-Hopson C."/>
            <person name="Hsuan V.W."/>
            <person name="Iida K."/>
            <person name="Karnes M."/>
            <person name="Khan S."/>
            <person name="Koesema E."/>
            <person name="Ishida J."/>
            <person name="Jiang P.X."/>
            <person name="Jones T."/>
            <person name="Kawai J."/>
            <person name="Kamiya A."/>
            <person name="Meyers C."/>
            <person name="Nakajima M."/>
            <person name="Narusaka M."/>
            <person name="Seki M."/>
            <person name="Sakurai T."/>
            <person name="Satou M."/>
            <person name="Tamse R."/>
            <person name="Vaysberg M."/>
            <person name="Wallender E.K."/>
            <person name="Wong C."/>
            <person name="Yamamura Y."/>
            <person name="Yuan S."/>
            <person name="Shinozaki K."/>
            <person name="Davis R.W."/>
            <person name="Theologis A."/>
            <person name="Ecker J.R."/>
        </authorList>
    </citation>
    <scope>NUCLEOTIDE SEQUENCE [LARGE SCALE MRNA] OF 210-250</scope>
    <source>
        <strain>cv. Columbia</strain>
    </source>
</reference>
<reference key="7">
    <citation type="journal article" date="1999" name="Mol. Biol. Rep.">
        <title>Structure and functional analyses of the 26S proteasome subunits from plants.</title>
        <authorList>
            <person name="Fu H."/>
            <person name="Girod P.-A."/>
            <person name="Doelling J.H."/>
            <person name="van Nocker S."/>
            <person name="Hochstrasser M."/>
            <person name="Finley D."/>
            <person name="Vierstra R.D."/>
        </authorList>
    </citation>
    <scope>SUBUNIT</scope>
</reference>
<reference key="8">
    <citation type="journal article" date="2004" name="J. Biol. Chem.">
        <title>Purification of the Arabidopsis 26 S proteasome: biochemical and molecular analyses revealed the presence of multiple isoforms.</title>
        <authorList>
            <person name="Yang P."/>
            <person name="Fu H."/>
            <person name="Walker J."/>
            <person name="Papa C.M."/>
            <person name="Smalle J."/>
            <person name="Ju Y.-M."/>
            <person name="Vierstra R.D."/>
        </authorList>
    </citation>
    <scope>SUBUNIT</scope>
    <scope>IDENTIFICATION BY MASS SPECTROMETRY</scope>
</reference>
<reference key="9">
    <citation type="journal article" date="2010" name="J. Biol. Chem.">
        <title>Affinity purification of the Arabidopsis 26 S proteasome reveals a diverse array of plant proteolytic complexes.</title>
        <authorList>
            <person name="Book A.J."/>
            <person name="Gladman N.P."/>
            <person name="Lee S.S."/>
            <person name="Scalf M."/>
            <person name="Smith L.M."/>
            <person name="Vierstra R.D."/>
        </authorList>
    </citation>
    <scope>IDENTIFICATION BY MASS SPECTROMETRY</scope>
    <scope>CHARACTERIZATION OF THE 26S PROTEASOME COMPLEX</scope>
    <scope>SUBUNIT</scope>
</reference>
<protein>
    <recommendedName>
        <fullName>Proteasome subunit alpha type-7-B</fullName>
    </recommendedName>
    <alternativeName>
        <fullName>20S proteasome alpha subunit D-2</fullName>
    </alternativeName>
    <alternativeName>
        <fullName>Proteasome component 6B</fullName>
    </alternativeName>
    <alternativeName>
        <fullName>Proteasome component 6C</fullName>
    </alternativeName>
    <alternativeName>
        <fullName>Proteasome subunit alpha type-4</fullName>
    </alternativeName>
</protein>
<feature type="chain" id="PRO_0000124160" description="Proteasome subunit alpha type-7-B">
    <location>
        <begin position="1"/>
        <end position="250"/>
    </location>
</feature>
<feature type="cross-link" description="Glycyl lysine isopeptide (Lys-Gly) (interchain with G-Cter in ubiquitin)" evidence="2">
    <location>
        <position position="62"/>
    </location>
</feature>